<comment type="function">
    <text evidence="1">Condenses 4-methyl-5-(beta-hydroxyethyl)thiazole monophosphate (THZ-P) and 2-methyl-4-amino-5-hydroxymethyl pyrimidine pyrophosphate (HMP-PP) to form thiamine monophosphate (TMP).</text>
</comment>
<comment type="catalytic activity">
    <reaction evidence="1">
        <text>2-[(2R,5Z)-2-carboxy-4-methylthiazol-5(2H)-ylidene]ethyl phosphate + 4-amino-2-methyl-5-(diphosphooxymethyl)pyrimidine + 2 H(+) = thiamine phosphate + CO2 + diphosphate</text>
        <dbReference type="Rhea" id="RHEA:47844"/>
        <dbReference type="ChEBI" id="CHEBI:15378"/>
        <dbReference type="ChEBI" id="CHEBI:16526"/>
        <dbReference type="ChEBI" id="CHEBI:33019"/>
        <dbReference type="ChEBI" id="CHEBI:37575"/>
        <dbReference type="ChEBI" id="CHEBI:57841"/>
        <dbReference type="ChEBI" id="CHEBI:62899"/>
        <dbReference type="EC" id="2.5.1.3"/>
    </reaction>
</comment>
<comment type="catalytic activity">
    <reaction evidence="1">
        <text>2-(2-carboxy-4-methylthiazol-5-yl)ethyl phosphate + 4-amino-2-methyl-5-(diphosphooxymethyl)pyrimidine + 2 H(+) = thiamine phosphate + CO2 + diphosphate</text>
        <dbReference type="Rhea" id="RHEA:47848"/>
        <dbReference type="ChEBI" id="CHEBI:15378"/>
        <dbReference type="ChEBI" id="CHEBI:16526"/>
        <dbReference type="ChEBI" id="CHEBI:33019"/>
        <dbReference type="ChEBI" id="CHEBI:37575"/>
        <dbReference type="ChEBI" id="CHEBI:57841"/>
        <dbReference type="ChEBI" id="CHEBI:62890"/>
        <dbReference type="EC" id="2.5.1.3"/>
    </reaction>
</comment>
<comment type="catalytic activity">
    <reaction evidence="1">
        <text>4-methyl-5-(2-phosphooxyethyl)-thiazole + 4-amino-2-methyl-5-(diphosphooxymethyl)pyrimidine + H(+) = thiamine phosphate + diphosphate</text>
        <dbReference type="Rhea" id="RHEA:22328"/>
        <dbReference type="ChEBI" id="CHEBI:15378"/>
        <dbReference type="ChEBI" id="CHEBI:33019"/>
        <dbReference type="ChEBI" id="CHEBI:37575"/>
        <dbReference type="ChEBI" id="CHEBI:57841"/>
        <dbReference type="ChEBI" id="CHEBI:58296"/>
        <dbReference type="EC" id="2.5.1.3"/>
    </reaction>
</comment>
<comment type="cofactor">
    <cofactor evidence="1">
        <name>Mg(2+)</name>
        <dbReference type="ChEBI" id="CHEBI:18420"/>
    </cofactor>
    <text evidence="1">Binds 1 Mg(2+) ion per subunit.</text>
</comment>
<comment type="pathway">
    <text evidence="1">Cofactor biosynthesis; thiamine diphosphate biosynthesis; thiamine phosphate from 4-amino-2-methyl-5-diphosphomethylpyrimidine and 4-methyl-5-(2-phosphoethyl)-thiazole: step 1/1.</text>
</comment>
<comment type="similarity">
    <text evidence="1">Belongs to the thiamine-phosphate synthase family.</text>
</comment>
<keyword id="KW-0460">Magnesium</keyword>
<keyword id="KW-0479">Metal-binding</keyword>
<keyword id="KW-1185">Reference proteome</keyword>
<keyword id="KW-0784">Thiamine biosynthesis</keyword>
<keyword id="KW-0808">Transferase</keyword>
<gene>
    <name evidence="1" type="primary">thiE</name>
    <name type="ordered locus">HI_0417</name>
</gene>
<proteinExistence type="evidence at protein level"/>
<dbReference type="EC" id="2.5.1.3" evidence="1"/>
<dbReference type="EMBL" id="L42023">
    <property type="protein sequence ID" value="AAC22075.1"/>
    <property type="molecule type" value="Genomic_DNA"/>
</dbReference>
<dbReference type="PIR" id="A64152">
    <property type="entry name" value="A64152"/>
</dbReference>
<dbReference type="RefSeq" id="NP_438579.1">
    <property type="nucleotide sequence ID" value="NC_000907.1"/>
</dbReference>
<dbReference type="SMR" id="P71350"/>
<dbReference type="STRING" id="71421.HI_0417"/>
<dbReference type="EnsemblBacteria" id="AAC22075">
    <property type="protein sequence ID" value="AAC22075"/>
    <property type="gene ID" value="HI_0417"/>
</dbReference>
<dbReference type="KEGG" id="hin:HI_0417"/>
<dbReference type="PATRIC" id="fig|71421.8.peg.437"/>
<dbReference type="eggNOG" id="COG0352">
    <property type="taxonomic scope" value="Bacteria"/>
</dbReference>
<dbReference type="HOGENOM" id="CLU_018272_3_2_6"/>
<dbReference type="OrthoDB" id="9810880at2"/>
<dbReference type="PhylomeDB" id="P71350"/>
<dbReference type="BioCyc" id="HINF71421:G1GJ1-432-MONOMER"/>
<dbReference type="UniPathway" id="UPA00060">
    <property type="reaction ID" value="UER00141"/>
</dbReference>
<dbReference type="Proteomes" id="UP000000579">
    <property type="component" value="Chromosome"/>
</dbReference>
<dbReference type="GO" id="GO:0005737">
    <property type="term" value="C:cytoplasm"/>
    <property type="evidence" value="ECO:0000318"/>
    <property type="project" value="GO_Central"/>
</dbReference>
<dbReference type="GO" id="GO:0000287">
    <property type="term" value="F:magnesium ion binding"/>
    <property type="evidence" value="ECO:0007669"/>
    <property type="project" value="UniProtKB-UniRule"/>
</dbReference>
<dbReference type="GO" id="GO:0004789">
    <property type="term" value="F:thiamine-phosphate diphosphorylase activity"/>
    <property type="evidence" value="ECO:0000318"/>
    <property type="project" value="GO_Central"/>
</dbReference>
<dbReference type="GO" id="GO:0009228">
    <property type="term" value="P:thiamine biosynthetic process"/>
    <property type="evidence" value="ECO:0000318"/>
    <property type="project" value="GO_Central"/>
</dbReference>
<dbReference type="GO" id="GO:0009229">
    <property type="term" value="P:thiamine diphosphate biosynthetic process"/>
    <property type="evidence" value="ECO:0007669"/>
    <property type="project" value="UniProtKB-UniRule"/>
</dbReference>
<dbReference type="CDD" id="cd00564">
    <property type="entry name" value="TMP_TenI"/>
    <property type="match status" value="1"/>
</dbReference>
<dbReference type="FunFam" id="3.20.20.70:FF:000096">
    <property type="entry name" value="Thiamine-phosphate synthase"/>
    <property type="match status" value="1"/>
</dbReference>
<dbReference type="Gene3D" id="3.20.20.70">
    <property type="entry name" value="Aldolase class I"/>
    <property type="match status" value="1"/>
</dbReference>
<dbReference type="HAMAP" id="MF_00097">
    <property type="entry name" value="TMP_synthase"/>
    <property type="match status" value="1"/>
</dbReference>
<dbReference type="InterPro" id="IPR013785">
    <property type="entry name" value="Aldolase_TIM"/>
</dbReference>
<dbReference type="InterPro" id="IPR036206">
    <property type="entry name" value="ThiamineP_synth_sf"/>
</dbReference>
<dbReference type="InterPro" id="IPR022998">
    <property type="entry name" value="ThiamineP_synth_TenI"/>
</dbReference>
<dbReference type="InterPro" id="IPR034291">
    <property type="entry name" value="TMP_synthase"/>
</dbReference>
<dbReference type="NCBIfam" id="TIGR00693">
    <property type="entry name" value="thiE"/>
    <property type="match status" value="1"/>
</dbReference>
<dbReference type="PANTHER" id="PTHR20857">
    <property type="entry name" value="THIAMINE-PHOSPHATE PYROPHOSPHORYLASE"/>
    <property type="match status" value="1"/>
</dbReference>
<dbReference type="PANTHER" id="PTHR20857:SF15">
    <property type="entry name" value="THIAMINE-PHOSPHATE SYNTHASE"/>
    <property type="match status" value="1"/>
</dbReference>
<dbReference type="Pfam" id="PF02581">
    <property type="entry name" value="TMP-TENI"/>
    <property type="match status" value="1"/>
</dbReference>
<dbReference type="SUPFAM" id="SSF51391">
    <property type="entry name" value="Thiamin phosphate synthase"/>
    <property type="match status" value="1"/>
</dbReference>
<feature type="chain" id="PRO_0000157016" description="Thiamine-phosphate synthase">
    <location>
        <begin position="1"/>
        <end position="226"/>
    </location>
</feature>
<feature type="binding site" evidence="1">
    <location>
        <begin position="46"/>
        <end position="50"/>
    </location>
    <ligand>
        <name>4-amino-2-methyl-5-(diphosphooxymethyl)pyrimidine</name>
        <dbReference type="ChEBI" id="CHEBI:57841"/>
    </ligand>
</feature>
<feature type="binding site" evidence="1">
    <location>
        <position position="83"/>
    </location>
    <ligand>
        <name>4-amino-2-methyl-5-(diphosphooxymethyl)pyrimidine</name>
        <dbReference type="ChEBI" id="CHEBI:57841"/>
    </ligand>
</feature>
<feature type="binding site" evidence="1">
    <location>
        <position position="84"/>
    </location>
    <ligand>
        <name>Mg(2+)</name>
        <dbReference type="ChEBI" id="CHEBI:18420"/>
    </ligand>
</feature>
<feature type="binding site" evidence="1">
    <location>
        <position position="103"/>
    </location>
    <ligand>
        <name>Mg(2+)</name>
        <dbReference type="ChEBI" id="CHEBI:18420"/>
    </ligand>
</feature>
<feature type="binding site" evidence="1">
    <location>
        <position position="122"/>
    </location>
    <ligand>
        <name>4-amino-2-methyl-5-(diphosphooxymethyl)pyrimidine</name>
        <dbReference type="ChEBI" id="CHEBI:57841"/>
    </ligand>
</feature>
<feature type="binding site" evidence="1">
    <location>
        <begin position="149"/>
        <end position="151"/>
    </location>
    <ligand>
        <name>2-[(2R,5Z)-2-carboxy-4-methylthiazol-5(2H)-ylidene]ethyl phosphate</name>
        <dbReference type="ChEBI" id="CHEBI:62899"/>
    </ligand>
</feature>
<feature type="binding site" evidence="1">
    <location>
        <position position="152"/>
    </location>
    <ligand>
        <name>4-amino-2-methyl-5-(diphosphooxymethyl)pyrimidine</name>
        <dbReference type="ChEBI" id="CHEBI:57841"/>
    </ligand>
</feature>
<feature type="binding site" evidence="1">
    <location>
        <position position="181"/>
    </location>
    <ligand>
        <name>2-[(2R,5Z)-2-carboxy-4-methylthiazol-5(2H)-ylidene]ethyl phosphate</name>
        <dbReference type="ChEBI" id="CHEBI:62899"/>
    </ligand>
</feature>
<feature type="binding site" evidence="1">
    <location>
        <begin position="201"/>
        <end position="202"/>
    </location>
    <ligand>
        <name>2-[(2R,5Z)-2-carboxy-4-methylthiazol-5(2H)-ylidene]ethyl phosphate</name>
        <dbReference type="ChEBI" id="CHEBI:62899"/>
    </ligand>
</feature>
<organism>
    <name type="scientific">Haemophilus influenzae (strain ATCC 51907 / DSM 11121 / KW20 / Rd)</name>
    <dbReference type="NCBI Taxonomy" id="71421"/>
    <lineage>
        <taxon>Bacteria</taxon>
        <taxon>Pseudomonadati</taxon>
        <taxon>Pseudomonadota</taxon>
        <taxon>Gammaproteobacteria</taxon>
        <taxon>Pasteurellales</taxon>
        <taxon>Pasteurellaceae</taxon>
        <taxon>Haemophilus</taxon>
    </lineage>
</organism>
<accession>P71350</accession>
<reference key="1">
    <citation type="journal article" date="1995" name="Science">
        <title>Whole-genome random sequencing and assembly of Haemophilus influenzae Rd.</title>
        <authorList>
            <person name="Fleischmann R.D."/>
            <person name="Adams M.D."/>
            <person name="White O."/>
            <person name="Clayton R.A."/>
            <person name="Kirkness E.F."/>
            <person name="Kerlavage A.R."/>
            <person name="Bult C.J."/>
            <person name="Tomb J.-F."/>
            <person name="Dougherty B.A."/>
            <person name="Merrick J.M."/>
            <person name="McKenney K."/>
            <person name="Sutton G.G."/>
            <person name="FitzHugh W."/>
            <person name="Fields C.A."/>
            <person name="Gocayne J.D."/>
            <person name="Scott J.D."/>
            <person name="Shirley R."/>
            <person name="Liu L.-I."/>
            <person name="Glodek A."/>
            <person name="Kelley J.M."/>
            <person name="Weidman J.F."/>
            <person name="Phillips C.A."/>
            <person name="Spriggs T."/>
            <person name="Hedblom E."/>
            <person name="Cotton M.D."/>
            <person name="Utterback T.R."/>
            <person name="Hanna M.C."/>
            <person name="Nguyen D.T."/>
            <person name="Saudek D.M."/>
            <person name="Brandon R.C."/>
            <person name="Fine L.D."/>
            <person name="Fritchman J.L."/>
            <person name="Fuhrmann J.L."/>
            <person name="Geoghagen N.S.M."/>
            <person name="Gnehm C.L."/>
            <person name="McDonald L.A."/>
            <person name="Small K.V."/>
            <person name="Fraser C.M."/>
            <person name="Smith H.O."/>
            <person name="Venter J.C."/>
        </authorList>
    </citation>
    <scope>NUCLEOTIDE SEQUENCE [LARGE SCALE GENOMIC DNA]</scope>
    <source>
        <strain>ATCC 51907 / DSM 11121 / KW20 / Rd</strain>
    </source>
</reference>
<reference key="2">
    <citation type="journal article" date="2000" name="Electrophoresis">
        <title>Two-dimensional map of the proteome of Haemophilus influenzae.</title>
        <authorList>
            <person name="Langen H."/>
            <person name="Takacs B."/>
            <person name="Evers S."/>
            <person name="Berndt P."/>
            <person name="Lahm H.W."/>
            <person name="Wipf B."/>
            <person name="Gray C."/>
            <person name="Fountoulakis M."/>
        </authorList>
    </citation>
    <scope>IDENTIFICATION BY MASS SPECTROMETRY</scope>
    <source>
        <strain>ATCC 51907 / DSM 11121 / KW20 / Rd</strain>
    </source>
</reference>
<protein>
    <recommendedName>
        <fullName evidence="1">Thiamine-phosphate synthase</fullName>
        <shortName evidence="1">TP synthase</shortName>
        <shortName evidence="1">TPS</shortName>
        <ecNumber evidence="1">2.5.1.3</ecNumber>
    </recommendedName>
    <alternativeName>
        <fullName evidence="1">Thiamine-phosphate pyrophosphorylase</fullName>
        <shortName evidence="1">TMP pyrophosphorylase</shortName>
        <shortName evidence="1">TMP-PPase</shortName>
    </alternativeName>
</protein>
<sequence length="226" mass="24730">MKNIQKILPLYFVAGTQDCRHLGENLSENLLFVLKQALEGGITCFQFRDKGKFSLEHTPSAQKALAINCRDLCREYGVPFIVDDNVDLALEIEADGIHVGQSDMPVQEIRAKTDKPLIIGWSVNRLDEAKIGENLAEIDYFGIGPIFPTQSKENPKPTLGMAFIQTLRNAGITKPLVAIGGVKLAHVKTLREFGADGVAVITAITHADNVQAATKALREASDEYAK</sequence>
<name>THIE_HAEIN</name>
<evidence type="ECO:0000255" key="1">
    <source>
        <dbReference type="HAMAP-Rule" id="MF_00097"/>
    </source>
</evidence>